<feature type="chain" id="PRO_0000258312" description="Phosphopentomutase">
    <location>
        <begin position="1"/>
        <end position="403"/>
    </location>
</feature>
<feature type="binding site" evidence="1">
    <location>
        <position position="13"/>
    </location>
    <ligand>
        <name>Mn(2+)</name>
        <dbReference type="ChEBI" id="CHEBI:29035"/>
        <label>1</label>
    </ligand>
</feature>
<feature type="binding site" evidence="1">
    <location>
        <position position="298"/>
    </location>
    <ligand>
        <name>Mn(2+)</name>
        <dbReference type="ChEBI" id="CHEBI:29035"/>
        <label>2</label>
    </ligand>
</feature>
<feature type="binding site" evidence="1">
    <location>
        <position position="303"/>
    </location>
    <ligand>
        <name>Mn(2+)</name>
        <dbReference type="ChEBI" id="CHEBI:29035"/>
        <label>2</label>
    </ligand>
</feature>
<feature type="binding site" evidence="1">
    <location>
        <position position="339"/>
    </location>
    <ligand>
        <name>Mn(2+)</name>
        <dbReference type="ChEBI" id="CHEBI:29035"/>
        <label>1</label>
    </ligand>
</feature>
<feature type="binding site" evidence="1">
    <location>
        <position position="340"/>
    </location>
    <ligand>
        <name>Mn(2+)</name>
        <dbReference type="ChEBI" id="CHEBI:29035"/>
        <label>1</label>
    </ligand>
</feature>
<feature type="binding site" evidence="1">
    <location>
        <position position="351"/>
    </location>
    <ligand>
        <name>Mn(2+)</name>
        <dbReference type="ChEBI" id="CHEBI:29035"/>
        <label>2</label>
    </ligand>
</feature>
<evidence type="ECO:0000255" key="1">
    <source>
        <dbReference type="HAMAP-Rule" id="MF_00740"/>
    </source>
</evidence>
<gene>
    <name evidence="1" type="primary">deoB</name>
    <name type="ordered locus">MGAS2096_Spy0768</name>
</gene>
<keyword id="KW-0963">Cytoplasm</keyword>
<keyword id="KW-0413">Isomerase</keyword>
<keyword id="KW-0464">Manganese</keyword>
<keyword id="KW-0479">Metal-binding</keyword>
<sequence>MSKFNRIHLVVLDSVGIGAAPDADKFFNAGVADTDSDTLGHISETAGLSVPNMAKIGLGNISRPIPLKTIPTEDNPTGYVTKLEEVSLGKDTMTGHWEIMGLNITEPFDTFWNGFPEEILTKIEEFSGRKIIREANKPYSGTAVIDDFGPRQMETGELIVYTSADPVLQIAAHEDIIPVEELYKICEYARSITLERPALLGRIIARPYVGEPGNFTRTANRHDYAVSPFQDTVLNKLADAGVPTYAVGKINDIFNGSGITNDMGHNKSNSHGIDTLIKTLQLPEFTKGFSFTNLVDFDANFGHRRDPEGYRDCLHEFDNRLPEIFANMKEDDLLLITADHGNDPTYAGTDHTREYIPLLAYSASFTGNGLIPQGHFADISATVAENFGVDTAMIGESFLGHLK</sequence>
<protein>
    <recommendedName>
        <fullName evidence="1">Phosphopentomutase</fullName>
        <ecNumber evidence="1">5.4.2.7</ecNumber>
    </recommendedName>
    <alternativeName>
        <fullName evidence="1">Phosphodeoxyribomutase</fullName>
    </alternativeName>
</protein>
<name>DEOB_STRPB</name>
<accession>Q1JC88</accession>
<organism>
    <name type="scientific">Streptococcus pyogenes serotype M12 (strain MGAS2096)</name>
    <dbReference type="NCBI Taxonomy" id="370553"/>
    <lineage>
        <taxon>Bacteria</taxon>
        <taxon>Bacillati</taxon>
        <taxon>Bacillota</taxon>
        <taxon>Bacilli</taxon>
        <taxon>Lactobacillales</taxon>
        <taxon>Streptococcaceae</taxon>
        <taxon>Streptococcus</taxon>
    </lineage>
</organism>
<comment type="function">
    <text evidence="1">Isomerase that catalyzes the conversion of deoxy-ribose 1-phosphate (dRib-1-P) and ribose 1-phosphate (Rib-1-P) to deoxy-ribose 5-phosphate (dRib-5-P) and ribose 5-phosphate (Rib-5-P), respectively.</text>
</comment>
<comment type="catalytic activity">
    <reaction evidence="1">
        <text>2-deoxy-alpha-D-ribose 1-phosphate = 2-deoxy-D-ribose 5-phosphate</text>
        <dbReference type="Rhea" id="RHEA:27658"/>
        <dbReference type="ChEBI" id="CHEBI:57259"/>
        <dbReference type="ChEBI" id="CHEBI:62877"/>
        <dbReference type="EC" id="5.4.2.7"/>
    </reaction>
</comment>
<comment type="catalytic activity">
    <reaction evidence="1">
        <text>alpha-D-ribose 1-phosphate = D-ribose 5-phosphate</text>
        <dbReference type="Rhea" id="RHEA:18793"/>
        <dbReference type="ChEBI" id="CHEBI:57720"/>
        <dbReference type="ChEBI" id="CHEBI:78346"/>
        <dbReference type="EC" id="5.4.2.7"/>
    </reaction>
</comment>
<comment type="cofactor">
    <cofactor evidence="1">
        <name>Mn(2+)</name>
        <dbReference type="ChEBI" id="CHEBI:29035"/>
    </cofactor>
    <text evidence="1">Binds 2 manganese ions.</text>
</comment>
<comment type="pathway">
    <text evidence="1">Carbohydrate degradation; 2-deoxy-D-ribose 1-phosphate degradation; D-glyceraldehyde 3-phosphate and acetaldehyde from 2-deoxy-alpha-D-ribose 1-phosphate: step 1/2.</text>
</comment>
<comment type="subcellular location">
    <subcellularLocation>
        <location evidence="1">Cytoplasm</location>
    </subcellularLocation>
</comment>
<comment type="similarity">
    <text evidence="1">Belongs to the phosphopentomutase family.</text>
</comment>
<proteinExistence type="inferred from homology"/>
<dbReference type="EC" id="5.4.2.7" evidence="1"/>
<dbReference type="EMBL" id="CP000261">
    <property type="protein sequence ID" value="ABF35820.1"/>
    <property type="molecule type" value="Genomic_DNA"/>
</dbReference>
<dbReference type="SMR" id="Q1JC88"/>
<dbReference type="KEGG" id="spj:MGAS2096_Spy0768"/>
<dbReference type="HOGENOM" id="CLU_053861_0_0_9"/>
<dbReference type="UniPathway" id="UPA00002">
    <property type="reaction ID" value="UER00467"/>
</dbReference>
<dbReference type="GO" id="GO:0005829">
    <property type="term" value="C:cytosol"/>
    <property type="evidence" value="ECO:0007669"/>
    <property type="project" value="TreeGrafter"/>
</dbReference>
<dbReference type="GO" id="GO:0000287">
    <property type="term" value="F:magnesium ion binding"/>
    <property type="evidence" value="ECO:0007669"/>
    <property type="project" value="InterPro"/>
</dbReference>
<dbReference type="GO" id="GO:0030145">
    <property type="term" value="F:manganese ion binding"/>
    <property type="evidence" value="ECO:0007669"/>
    <property type="project" value="UniProtKB-UniRule"/>
</dbReference>
<dbReference type="GO" id="GO:0008973">
    <property type="term" value="F:phosphopentomutase activity"/>
    <property type="evidence" value="ECO:0007669"/>
    <property type="project" value="UniProtKB-UniRule"/>
</dbReference>
<dbReference type="GO" id="GO:0006018">
    <property type="term" value="P:2-deoxyribose 1-phosphate catabolic process"/>
    <property type="evidence" value="ECO:0007669"/>
    <property type="project" value="UniProtKB-UniRule"/>
</dbReference>
<dbReference type="GO" id="GO:0006015">
    <property type="term" value="P:5-phosphoribose 1-diphosphate biosynthetic process"/>
    <property type="evidence" value="ECO:0007669"/>
    <property type="project" value="UniProtKB-UniPathway"/>
</dbReference>
<dbReference type="GO" id="GO:0043094">
    <property type="term" value="P:metabolic compound salvage"/>
    <property type="evidence" value="ECO:0007669"/>
    <property type="project" value="InterPro"/>
</dbReference>
<dbReference type="GO" id="GO:0009117">
    <property type="term" value="P:nucleotide metabolic process"/>
    <property type="evidence" value="ECO:0007669"/>
    <property type="project" value="InterPro"/>
</dbReference>
<dbReference type="CDD" id="cd16009">
    <property type="entry name" value="PPM"/>
    <property type="match status" value="1"/>
</dbReference>
<dbReference type="FunFam" id="3.30.70.1250:FF:000001">
    <property type="entry name" value="Phosphopentomutase"/>
    <property type="match status" value="1"/>
</dbReference>
<dbReference type="Gene3D" id="3.40.720.10">
    <property type="entry name" value="Alkaline Phosphatase, subunit A"/>
    <property type="match status" value="1"/>
</dbReference>
<dbReference type="Gene3D" id="3.30.70.1250">
    <property type="entry name" value="Phosphopentomutase"/>
    <property type="match status" value="1"/>
</dbReference>
<dbReference type="HAMAP" id="MF_00740">
    <property type="entry name" value="Phosphopentomut"/>
    <property type="match status" value="1"/>
</dbReference>
<dbReference type="InterPro" id="IPR017850">
    <property type="entry name" value="Alkaline_phosphatase_core_sf"/>
</dbReference>
<dbReference type="InterPro" id="IPR010045">
    <property type="entry name" value="DeoB"/>
</dbReference>
<dbReference type="InterPro" id="IPR006124">
    <property type="entry name" value="Metalloenzyme"/>
</dbReference>
<dbReference type="InterPro" id="IPR024052">
    <property type="entry name" value="Phosphopentomutase_DeoB_cap_sf"/>
</dbReference>
<dbReference type="NCBIfam" id="TIGR01696">
    <property type="entry name" value="deoB"/>
    <property type="match status" value="1"/>
</dbReference>
<dbReference type="NCBIfam" id="NF003766">
    <property type="entry name" value="PRK05362.1"/>
    <property type="match status" value="1"/>
</dbReference>
<dbReference type="PANTHER" id="PTHR21110">
    <property type="entry name" value="PHOSPHOPENTOMUTASE"/>
    <property type="match status" value="1"/>
</dbReference>
<dbReference type="PANTHER" id="PTHR21110:SF0">
    <property type="entry name" value="PHOSPHOPENTOMUTASE"/>
    <property type="match status" value="1"/>
</dbReference>
<dbReference type="Pfam" id="PF01676">
    <property type="entry name" value="Metalloenzyme"/>
    <property type="match status" value="1"/>
</dbReference>
<dbReference type="PIRSF" id="PIRSF001491">
    <property type="entry name" value="Ppentomutase"/>
    <property type="match status" value="1"/>
</dbReference>
<dbReference type="SUPFAM" id="SSF53649">
    <property type="entry name" value="Alkaline phosphatase-like"/>
    <property type="match status" value="1"/>
</dbReference>
<dbReference type="SUPFAM" id="SSF143856">
    <property type="entry name" value="DeoB insert domain-like"/>
    <property type="match status" value="1"/>
</dbReference>
<reference key="1">
    <citation type="journal article" date="2006" name="Proc. Natl. Acad. Sci. U.S.A.">
        <title>Molecular genetic anatomy of inter- and intraserotype variation in the human bacterial pathogen group A Streptococcus.</title>
        <authorList>
            <person name="Beres S.B."/>
            <person name="Richter E.W."/>
            <person name="Nagiec M.J."/>
            <person name="Sumby P."/>
            <person name="Porcella S.F."/>
            <person name="DeLeo F.R."/>
            <person name="Musser J.M."/>
        </authorList>
    </citation>
    <scope>NUCLEOTIDE SEQUENCE [LARGE SCALE GENOMIC DNA]</scope>
    <source>
        <strain>MGAS2096</strain>
    </source>
</reference>